<proteinExistence type="inferred from homology"/>
<reference key="1">
    <citation type="journal article" date="2009" name="Appl. Environ. Microbiol.">
        <title>Three genomes from the phylum Acidobacteria provide insight into the lifestyles of these microorganisms in soils.</title>
        <authorList>
            <person name="Ward N.L."/>
            <person name="Challacombe J.F."/>
            <person name="Janssen P.H."/>
            <person name="Henrissat B."/>
            <person name="Coutinho P.M."/>
            <person name="Wu M."/>
            <person name="Xie G."/>
            <person name="Haft D.H."/>
            <person name="Sait M."/>
            <person name="Badger J."/>
            <person name="Barabote R.D."/>
            <person name="Bradley B."/>
            <person name="Brettin T.S."/>
            <person name="Brinkac L.M."/>
            <person name="Bruce D."/>
            <person name="Creasy T."/>
            <person name="Daugherty S.C."/>
            <person name="Davidsen T.M."/>
            <person name="DeBoy R.T."/>
            <person name="Detter J.C."/>
            <person name="Dodson R.J."/>
            <person name="Durkin A.S."/>
            <person name="Ganapathy A."/>
            <person name="Gwinn-Giglio M."/>
            <person name="Han C.S."/>
            <person name="Khouri H."/>
            <person name="Kiss H."/>
            <person name="Kothari S.P."/>
            <person name="Madupu R."/>
            <person name="Nelson K.E."/>
            <person name="Nelson W.C."/>
            <person name="Paulsen I."/>
            <person name="Penn K."/>
            <person name="Ren Q."/>
            <person name="Rosovitz M.J."/>
            <person name="Selengut J.D."/>
            <person name="Shrivastava S."/>
            <person name="Sullivan S.A."/>
            <person name="Tapia R."/>
            <person name="Thompson L.S."/>
            <person name="Watkins K.L."/>
            <person name="Yang Q."/>
            <person name="Yu C."/>
            <person name="Zafar N."/>
            <person name="Zhou L."/>
            <person name="Kuske C.R."/>
        </authorList>
    </citation>
    <scope>NUCLEOTIDE SEQUENCE [LARGE SCALE GENOMIC DNA]</scope>
    <source>
        <strain>Ellin345</strain>
    </source>
</reference>
<dbReference type="EC" id="3.6.1.7"/>
<dbReference type="EMBL" id="CP000360">
    <property type="protein sequence ID" value="ABF42608.1"/>
    <property type="molecule type" value="Genomic_DNA"/>
</dbReference>
<dbReference type="SMR" id="Q1IKJ2"/>
<dbReference type="STRING" id="204669.Acid345_3607"/>
<dbReference type="EnsemblBacteria" id="ABF42608">
    <property type="protein sequence ID" value="ABF42608"/>
    <property type="gene ID" value="Acid345_3607"/>
</dbReference>
<dbReference type="KEGG" id="aba:Acid345_3607"/>
<dbReference type="eggNOG" id="COG1254">
    <property type="taxonomic scope" value="Bacteria"/>
</dbReference>
<dbReference type="HOGENOM" id="CLU_141932_3_2_0"/>
<dbReference type="OrthoDB" id="9808093at2"/>
<dbReference type="Proteomes" id="UP000002432">
    <property type="component" value="Chromosome"/>
</dbReference>
<dbReference type="GO" id="GO:0003998">
    <property type="term" value="F:acylphosphatase activity"/>
    <property type="evidence" value="ECO:0007669"/>
    <property type="project" value="UniProtKB-EC"/>
</dbReference>
<dbReference type="Gene3D" id="3.30.70.100">
    <property type="match status" value="1"/>
</dbReference>
<dbReference type="InterPro" id="IPR020456">
    <property type="entry name" value="Acylphosphatase"/>
</dbReference>
<dbReference type="InterPro" id="IPR001792">
    <property type="entry name" value="Acylphosphatase-like_dom"/>
</dbReference>
<dbReference type="InterPro" id="IPR036046">
    <property type="entry name" value="Acylphosphatase-like_dom_sf"/>
</dbReference>
<dbReference type="InterPro" id="IPR017968">
    <property type="entry name" value="Acylphosphatase_CS"/>
</dbReference>
<dbReference type="PANTHER" id="PTHR47268">
    <property type="entry name" value="ACYLPHOSPHATASE"/>
    <property type="match status" value="1"/>
</dbReference>
<dbReference type="PANTHER" id="PTHR47268:SF4">
    <property type="entry name" value="ACYLPHOSPHATASE"/>
    <property type="match status" value="1"/>
</dbReference>
<dbReference type="Pfam" id="PF00708">
    <property type="entry name" value="Acylphosphatase"/>
    <property type="match status" value="1"/>
</dbReference>
<dbReference type="PRINTS" id="PR00112">
    <property type="entry name" value="ACYLPHPHTASE"/>
</dbReference>
<dbReference type="SUPFAM" id="SSF54975">
    <property type="entry name" value="Acylphosphatase/BLUF domain-like"/>
    <property type="match status" value="1"/>
</dbReference>
<dbReference type="PROSITE" id="PS00150">
    <property type="entry name" value="ACYLPHOSPHATASE_1"/>
    <property type="match status" value="1"/>
</dbReference>
<dbReference type="PROSITE" id="PS00151">
    <property type="entry name" value="ACYLPHOSPHATASE_2"/>
    <property type="match status" value="1"/>
</dbReference>
<dbReference type="PROSITE" id="PS51160">
    <property type="entry name" value="ACYLPHOSPHATASE_3"/>
    <property type="match status" value="1"/>
</dbReference>
<accession>Q1IKJ2</accession>
<organism>
    <name type="scientific">Koribacter versatilis (strain Ellin345)</name>
    <dbReference type="NCBI Taxonomy" id="204669"/>
    <lineage>
        <taxon>Bacteria</taxon>
        <taxon>Pseudomonadati</taxon>
        <taxon>Acidobacteriota</taxon>
        <taxon>Terriglobia</taxon>
        <taxon>Terriglobales</taxon>
        <taxon>Candidatus Korobacteraceae</taxon>
        <taxon>Candidatus Korobacter</taxon>
    </lineage>
</organism>
<evidence type="ECO:0000255" key="1">
    <source>
        <dbReference type="PROSITE-ProRule" id="PRU00520"/>
    </source>
</evidence>
<evidence type="ECO:0000305" key="2"/>
<feature type="chain" id="PRO_0000326639" description="Acylphosphatase">
    <location>
        <begin position="1"/>
        <end position="110"/>
    </location>
</feature>
<feature type="domain" description="Acylphosphatase-like" evidence="1">
    <location>
        <begin position="21"/>
        <end position="108"/>
    </location>
</feature>
<feature type="active site" evidence="1">
    <location>
        <position position="36"/>
    </location>
</feature>
<feature type="active site" evidence="1">
    <location>
        <position position="54"/>
    </location>
</feature>
<comment type="catalytic activity">
    <reaction>
        <text>an acyl phosphate + H2O = a carboxylate + phosphate + H(+)</text>
        <dbReference type="Rhea" id="RHEA:14965"/>
        <dbReference type="ChEBI" id="CHEBI:15377"/>
        <dbReference type="ChEBI" id="CHEBI:15378"/>
        <dbReference type="ChEBI" id="CHEBI:29067"/>
        <dbReference type="ChEBI" id="CHEBI:43474"/>
        <dbReference type="ChEBI" id="CHEBI:59918"/>
        <dbReference type="EC" id="3.6.1.7"/>
    </reaction>
</comment>
<comment type="similarity">
    <text evidence="2">Belongs to the acylphosphatase family.</text>
</comment>
<sequence>MENEATVPAGREASMTETNETRRYLVTGRVQGVGFRWFVEHAAVQLGLAGWVRNRADGRVEVLASGPRQKLHDLYVELKKGPRASRVDNVEVEDAAPETNLKSFRIEGTW</sequence>
<protein>
    <recommendedName>
        <fullName>Acylphosphatase</fullName>
        <ecNumber>3.6.1.7</ecNumber>
    </recommendedName>
    <alternativeName>
        <fullName>Acylphosphate phosphohydrolase</fullName>
    </alternativeName>
</protein>
<keyword id="KW-0378">Hydrolase</keyword>
<keyword id="KW-1185">Reference proteome</keyword>
<gene>
    <name type="primary">acyP</name>
    <name type="ordered locus">Acid345_3607</name>
</gene>
<name>ACYP_KORVE</name>